<comment type="function">
    <text evidence="1">Reversibly transfers an adenylyl group from ATP to 4'-phosphopantetheine, yielding dephospho-CoA (dPCoA) and pyrophosphate.</text>
</comment>
<comment type="catalytic activity">
    <reaction evidence="1">
        <text>(R)-4'-phosphopantetheine + ATP + H(+) = 3'-dephospho-CoA + diphosphate</text>
        <dbReference type="Rhea" id="RHEA:19801"/>
        <dbReference type="ChEBI" id="CHEBI:15378"/>
        <dbReference type="ChEBI" id="CHEBI:30616"/>
        <dbReference type="ChEBI" id="CHEBI:33019"/>
        <dbReference type="ChEBI" id="CHEBI:57328"/>
        <dbReference type="ChEBI" id="CHEBI:61723"/>
        <dbReference type="EC" id="2.7.7.3"/>
    </reaction>
</comment>
<comment type="cofactor">
    <cofactor evidence="1">
        <name>Mg(2+)</name>
        <dbReference type="ChEBI" id="CHEBI:18420"/>
    </cofactor>
</comment>
<comment type="pathway">
    <text evidence="1">Cofactor biosynthesis; coenzyme A biosynthesis; CoA from (R)-pantothenate: step 4/5.</text>
</comment>
<comment type="subunit">
    <text evidence="1">Homohexamer.</text>
</comment>
<comment type="subcellular location">
    <subcellularLocation>
        <location evidence="1">Cytoplasm</location>
    </subcellularLocation>
</comment>
<comment type="similarity">
    <text evidence="1">Belongs to the bacterial CoaD family.</text>
</comment>
<name>COAD_NEIMA</name>
<organism>
    <name type="scientific">Neisseria meningitidis serogroup A / serotype 4A (strain DSM 15465 / Z2491)</name>
    <dbReference type="NCBI Taxonomy" id="122587"/>
    <lineage>
        <taxon>Bacteria</taxon>
        <taxon>Pseudomonadati</taxon>
        <taxon>Pseudomonadota</taxon>
        <taxon>Betaproteobacteria</taxon>
        <taxon>Neisseriales</taxon>
        <taxon>Neisseriaceae</taxon>
        <taxon>Neisseria</taxon>
    </lineage>
</organism>
<dbReference type="EC" id="2.7.7.3" evidence="1"/>
<dbReference type="EMBL" id="AL157959">
    <property type="protein sequence ID" value="CAM07709.1"/>
    <property type="molecule type" value="Genomic_DNA"/>
</dbReference>
<dbReference type="RefSeq" id="WP_002218149.1">
    <property type="nucleotide sequence ID" value="NC_003116.1"/>
</dbReference>
<dbReference type="SMR" id="P63816"/>
<dbReference type="EnsemblBacteria" id="CAM07709">
    <property type="protein sequence ID" value="CAM07709"/>
    <property type="gene ID" value="NMA0421"/>
</dbReference>
<dbReference type="GeneID" id="93386940"/>
<dbReference type="KEGG" id="nma:NMA0421"/>
<dbReference type="HOGENOM" id="CLU_100149_0_1_4"/>
<dbReference type="UniPathway" id="UPA00241">
    <property type="reaction ID" value="UER00355"/>
</dbReference>
<dbReference type="Proteomes" id="UP000000626">
    <property type="component" value="Chromosome"/>
</dbReference>
<dbReference type="GO" id="GO:0005737">
    <property type="term" value="C:cytoplasm"/>
    <property type="evidence" value="ECO:0007669"/>
    <property type="project" value="UniProtKB-SubCell"/>
</dbReference>
<dbReference type="GO" id="GO:0005524">
    <property type="term" value="F:ATP binding"/>
    <property type="evidence" value="ECO:0007669"/>
    <property type="project" value="UniProtKB-KW"/>
</dbReference>
<dbReference type="GO" id="GO:0004595">
    <property type="term" value="F:pantetheine-phosphate adenylyltransferase activity"/>
    <property type="evidence" value="ECO:0007669"/>
    <property type="project" value="UniProtKB-UniRule"/>
</dbReference>
<dbReference type="GO" id="GO:0015937">
    <property type="term" value="P:coenzyme A biosynthetic process"/>
    <property type="evidence" value="ECO:0007669"/>
    <property type="project" value="UniProtKB-UniRule"/>
</dbReference>
<dbReference type="CDD" id="cd02163">
    <property type="entry name" value="PPAT"/>
    <property type="match status" value="1"/>
</dbReference>
<dbReference type="Gene3D" id="3.40.50.620">
    <property type="entry name" value="HUPs"/>
    <property type="match status" value="1"/>
</dbReference>
<dbReference type="HAMAP" id="MF_00151">
    <property type="entry name" value="PPAT_bact"/>
    <property type="match status" value="1"/>
</dbReference>
<dbReference type="InterPro" id="IPR004821">
    <property type="entry name" value="Cyt_trans-like"/>
</dbReference>
<dbReference type="InterPro" id="IPR001980">
    <property type="entry name" value="PPAT"/>
</dbReference>
<dbReference type="InterPro" id="IPR014729">
    <property type="entry name" value="Rossmann-like_a/b/a_fold"/>
</dbReference>
<dbReference type="NCBIfam" id="TIGR01510">
    <property type="entry name" value="coaD_prev_kdtB"/>
    <property type="match status" value="1"/>
</dbReference>
<dbReference type="NCBIfam" id="TIGR00125">
    <property type="entry name" value="cyt_tran_rel"/>
    <property type="match status" value="1"/>
</dbReference>
<dbReference type="PANTHER" id="PTHR21342">
    <property type="entry name" value="PHOSPHOPANTETHEINE ADENYLYLTRANSFERASE"/>
    <property type="match status" value="1"/>
</dbReference>
<dbReference type="PANTHER" id="PTHR21342:SF1">
    <property type="entry name" value="PHOSPHOPANTETHEINE ADENYLYLTRANSFERASE"/>
    <property type="match status" value="1"/>
</dbReference>
<dbReference type="Pfam" id="PF01467">
    <property type="entry name" value="CTP_transf_like"/>
    <property type="match status" value="1"/>
</dbReference>
<dbReference type="PRINTS" id="PR01020">
    <property type="entry name" value="LPSBIOSNTHSS"/>
</dbReference>
<dbReference type="SUPFAM" id="SSF52374">
    <property type="entry name" value="Nucleotidylyl transferase"/>
    <property type="match status" value="1"/>
</dbReference>
<feature type="chain" id="PRO_0000156243" description="Phosphopantetheine adenylyltransferase">
    <location>
        <begin position="1"/>
        <end position="170"/>
    </location>
</feature>
<feature type="binding site" evidence="1">
    <location>
        <begin position="14"/>
        <end position="15"/>
    </location>
    <ligand>
        <name>ATP</name>
        <dbReference type="ChEBI" id="CHEBI:30616"/>
    </ligand>
</feature>
<feature type="binding site" evidence="1">
    <location>
        <position position="14"/>
    </location>
    <ligand>
        <name>substrate</name>
    </ligand>
</feature>
<feature type="binding site" evidence="1">
    <location>
        <position position="22"/>
    </location>
    <ligand>
        <name>ATP</name>
        <dbReference type="ChEBI" id="CHEBI:30616"/>
    </ligand>
</feature>
<feature type="binding site" evidence="1">
    <location>
        <position position="46"/>
    </location>
    <ligand>
        <name>substrate</name>
    </ligand>
</feature>
<feature type="binding site" evidence="1">
    <location>
        <position position="79"/>
    </location>
    <ligand>
        <name>substrate</name>
    </ligand>
</feature>
<feature type="binding site" evidence="1">
    <location>
        <position position="93"/>
    </location>
    <ligand>
        <name>substrate</name>
    </ligand>
</feature>
<feature type="binding site" evidence="1">
    <location>
        <begin position="94"/>
        <end position="96"/>
    </location>
    <ligand>
        <name>ATP</name>
        <dbReference type="ChEBI" id="CHEBI:30616"/>
    </ligand>
</feature>
<feature type="binding site" evidence="1">
    <location>
        <position position="104"/>
    </location>
    <ligand>
        <name>ATP</name>
        <dbReference type="ChEBI" id="CHEBI:30616"/>
    </ligand>
</feature>
<feature type="binding site" evidence="1">
    <location>
        <begin position="129"/>
        <end position="135"/>
    </location>
    <ligand>
        <name>ATP</name>
        <dbReference type="ChEBI" id="CHEBI:30616"/>
    </ligand>
</feature>
<feature type="site" description="Transition state stabilizer" evidence="1">
    <location>
        <position position="22"/>
    </location>
</feature>
<reference key="1">
    <citation type="journal article" date="2000" name="Nature">
        <title>Complete DNA sequence of a serogroup A strain of Neisseria meningitidis Z2491.</title>
        <authorList>
            <person name="Parkhill J."/>
            <person name="Achtman M."/>
            <person name="James K.D."/>
            <person name="Bentley S.D."/>
            <person name="Churcher C.M."/>
            <person name="Klee S.R."/>
            <person name="Morelli G."/>
            <person name="Basham D."/>
            <person name="Brown D."/>
            <person name="Chillingworth T."/>
            <person name="Davies R.M."/>
            <person name="Davis P."/>
            <person name="Devlin K."/>
            <person name="Feltwell T."/>
            <person name="Hamlin N."/>
            <person name="Holroyd S."/>
            <person name="Jagels K."/>
            <person name="Leather S."/>
            <person name="Moule S."/>
            <person name="Mungall K.L."/>
            <person name="Quail M.A."/>
            <person name="Rajandream M.A."/>
            <person name="Rutherford K.M."/>
            <person name="Simmonds M."/>
            <person name="Skelton J."/>
            <person name="Whitehead S."/>
            <person name="Spratt B.G."/>
            <person name="Barrell B.G."/>
        </authorList>
    </citation>
    <scope>NUCLEOTIDE SEQUENCE [LARGE SCALE GENOMIC DNA]</scope>
    <source>
        <strain>DSM 15465 / Z2491</strain>
    </source>
</reference>
<sequence>MLPNTPRRAVYAGSFDPPTLGHLWMIRQAQSMFDELIVAIGINPDKRSTYTVAERQDMLCDITKMFPNVRTDVFENRFLVHYAREVDAGFIVRGIRSASDYEYERSMRHINSDLAPEISTVFLMPPREIAEVSSTMVKGLVGPEGWTETIHRYVPQAVYEKILAEHQHEN</sequence>
<accession>P63816</accession>
<accession>A1IPN8</accession>
<accession>Q9JQY9</accession>
<protein>
    <recommendedName>
        <fullName evidence="1">Phosphopantetheine adenylyltransferase</fullName>
        <ecNumber evidence="1">2.7.7.3</ecNumber>
    </recommendedName>
    <alternativeName>
        <fullName evidence="1">Dephospho-CoA pyrophosphorylase</fullName>
    </alternativeName>
    <alternativeName>
        <fullName evidence="1">Pantetheine-phosphate adenylyltransferase</fullName>
        <shortName evidence="1">PPAT</shortName>
    </alternativeName>
</protein>
<proteinExistence type="inferred from homology"/>
<evidence type="ECO:0000255" key="1">
    <source>
        <dbReference type="HAMAP-Rule" id="MF_00151"/>
    </source>
</evidence>
<keyword id="KW-0067">ATP-binding</keyword>
<keyword id="KW-0173">Coenzyme A biosynthesis</keyword>
<keyword id="KW-0963">Cytoplasm</keyword>
<keyword id="KW-0460">Magnesium</keyword>
<keyword id="KW-0547">Nucleotide-binding</keyword>
<keyword id="KW-0548">Nucleotidyltransferase</keyword>
<keyword id="KW-0808">Transferase</keyword>
<gene>
    <name evidence="1" type="primary">coaD</name>
    <name type="synonym">kdtB</name>
    <name type="ordered locus">NMA0421</name>
</gene>